<organism>
    <name type="scientific">Rickettsia africae (strain ESF-5)</name>
    <dbReference type="NCBI Taxonomy" id="347255"/>
    <lineage>
        <taxon>Bacteria</taxon>
        <taxon>Pseudomonadati</taxon>
        <taxon>Pseudomonadota</taxon>
        <taxon>Alphaproteobacteria</taxon>
        <taxon>Rickettsiales</taxon>
        <taxon>Rickettsiaceae</taxon>
        <taxon>Rickettsieae</taxon>
        <taxon>Rickettsia</taxon>
        <taxon>spotted fever group</taxon>
    </lineage>
</organism>
<reference key="1">
    <citation type="journal article" date="2009" name="BMC Genomics">
        <title>Analysis of the Rickettsia africae genome reveals that virulence acquisition in Rickettsia species may be explained by genome reduction.</title>
        <authorList>
            <person name="Fournier P.-E."/>
            <person name="El Karkouri K."/>
            <person name="Leroy Q."/>
            <person name="Robert C."/>
            <person name="Giumelli B."/>
            <person name="Renesto P."/>
            <person name="Socolovschi C."/>
            <person name="Parola P."/>
            <person name="Audic S."/>
            <person name="Raoult D."/>
        </authorList>
    </citation>
    <scope>NUCLEOTIDE SEQUENCE [LARGE SCALE GENOMIC DNA]</scope>
    <source>
        <strain>ESF-5</strain>
    </source>
</reference>
<dbReference type="EC" id="7.1.1.-" evidence="1"/>
<dbReference type="EMBL" id="CP001612">
    <property type="protein sequence ID" value="ACP53916.1"/>
    <property type="molecule type" value="Genomic_DNA"/>
</dbReference>
<dbReference type="RefSeq" id="WP_012720044.1">
    <property type="nucleotide sequence ID" value="NC_012633.1"/>
</dbReference>
<dbReference type="SMR" id="C3PLS6"/>
<dbReference type="KEGG" id="raf:RAF_ORF1121"/>
<dbReference type="HOGENOM" id="CLU_015134_0_1_5"/>
<dbReference type="Proteomes" id="UP000002305">
    <property type="component" value="Chromosome"/>
</dbReference>
<dbReference type="GO" id="GO:0005886">
    <property type="term" value="C:plasma membrane"/>
    <property type="evidence" value="ECO:0007669"/>
    <property type="project" value="UniProtKB-SubCell"/>
</dbReference>
<dbReference type="GO" id="GO:0003954">
    <property type="term" value="F:NADH dehydrogenase activity"/>
    <property type="evidence" value="ECO:0007669"/>
    <property type="project" value="TreeGrafter"/>
</dbReference>
<dbReference type="GO" id="GO:0016655">
    <property type="term" value="F:oxidoreductase activity, acting on NAD(P)H, quinone or similar compound as acceptor"/>
    <property type="evidence" value="ECO:0007669"/>
    <property type="project" value="UniProtKB-UniRule"/>
</dbReference>
<dbReference type="GO" id="GO:0048038">
    <property type="term" value="F:quinone binding"/>
    <property type="evidence" value="ECO:0007669"/>
    <property type="project" value="UniProtKB-KW"/>
</dbReference>
<dbReference type="GO" id="GO:0009060">
    <property type="term" value="P:aerobic respiration"/>
    <property type="evidence" value="ECO:0007669"/>
    <property type="project" value="TreeGrafter"/>
</dbReference>
<dbReference type="HAMAP" id="MF_01350">
    <property type="entry name" value="NDH1_NuoH"/>
    <property type="match status" value="1"/>
</dbReference>
<dbReference type="InterPro" id="IPR001694">
    <property type="entry name" value="NADH_UbQ_OxRdtase_su1/FPO"/>
</dbReference>
<dbReference type="InterPro" id="IPR018086">
    <property type="entry name" value="NADH_UbQ_OxRdtase_su1_CS"/>
</dbReference>
<dbReference type="NCBIfam" id="NF004741">
    <property type="entry name" value="PRK06076.1-2"/>
    <property type="match status" value="1"/>
</dbReference>
<dbReference type="NCBIfam" id="NF004745">
    <property type="entry name" value="PRK06076.1-6"/>
    <property type="match status" value="1"/>
</dbReference>
<dbReference type="PANTHER" id="PTHR11432">
    <property type="entry name" value="NADH DEHYDROGENASE SUBUNIT 1"/>
    <property type="match status" value="1"/>
</dbReference>
<dbReference type="PANTHER" id="PTHR11432:SF3">
    <property type="entry name" value="NADH-UBIQUINONE OXIDOREDUCTASE CHAIN 1"/>
    <property type="match status" value="1"/>
</dbReference>
<dbReference type="Pfam" id="PF00146">
    <property type="entry name" value="NADHdh"/>
    <property type="match status" value="1"/>
</dbReference>
<dbReference type="PROSITE" id="PS00667">
    <property type="entry name" value="COMPLEX1_ND1_1"/>
    <property type="match status" value="1"/>
</dbReference>
<dbReference type="PROSITE" id="PS00668">
    <property type="entry name" value="COMPLEX1_ND1_2"/>
    <property type="match status" value="1"/>
</dbReference>
<evidence type="ECO:0000255" key="1">
    <source>
        <dbReference type="HAMAP-Rule" id="MF_01350"/>
    </source>
</evidence>
<feature type="chain" id="PRO_1000214844" description="NADH-quinone oxidoreductase subunit H">
    <location>
        <begin position="1"/>
        <end position="339"/>
    </location>
</feature>
<feature type="transmembrane region" description="Helical" evidence="1">
    <location>
        <begin position="9"/>
        <end position="29"/>
    </location>
</feature>
<feature type="transmembrane region" description="Helical" evidence="1">
    <location>
        <begin position="50"/>
        <end position="70"/>
    </location>
</feature>
<feature type="transmembrane region" description="Helical" evidence="1">
    <location>
        <begin position="82"/>
        <end position="102"/>
    </location>
</feature>
<feature type="transmembrane region" description="Helical" evidence="1">
    <location>
        <begin position="115"/>
        <end position="135"/>
    </location>
</feature>
<feature type="transmembrane region" description="Helical" evidence="1">
    <location>
        <begin position="161"/>
        <end position="181"/>
    </location>
</feature>
<feature type="transmembrane region" description="Helical" evidence="1">
    <location>
        <begin position="187"/>
        <end position="207"/>
    </location>
</feature>
<feature type="transmembrane region" description="Helical" evidence="1">
    <location>
        <begin position="235"/>
        <end position="255"/>
    </location>
</feature>
<feature type="transmembrane region" description="Helical" evidence="1">
    <location>
        <begin position="275"/>
        <end position="295"/>
    </location>
</feature>
<feature type="transmembrane region" description="Helical" evidence="1">
    <location>
        <begin position="311"/>
        <end position="331"/>
    </location>
</feature>
<gene>
    <name evidence="1" type="primary">nuoH</name>
    <name type="ordered locus">RAF_ORF1121</name>
</gene>
<protein>
    <recommendedName>
        <fullName evidence="1">NADH-quinone oxidoreductase subunit H</fullName>
        <ecNumber evidence="1">7.1.1.-</ecNumber>
    </recommendedName>
    <alternativeName>
        <fullName evidence="1">NADH dehydrogenase I subunit H</fullName>
    </alternativeName>
    <alternativeName>
        <fullName evidence="1">NDH-1 subunit H</fullName>
    </alternativeName>
</protein>
<name>NUOH_RICAE</name>
<sequence>MLELFFEYIFPLIIIALKVVAITIPLILCVAYLTYAERRVIGLMQLRRGPNVVGPFGLLQPIADAVKLLFKEPIIPTNSDKILFILAPMITFILSLIGWAVIPFAKGVVLADINVGVLYILAISSLSVYGIIIAGWASNSKYAFLGAIRSSAQMISYEVSMGLVIITVLLTTGTLNLSEIIEVQRTMPWWIDLMLLPMGVVFFISVLAETNRLPFDLPEAESELVAGYNVEYSSMGFALFFLGEYANMILVSAMTTTFFLGGYLPPFNISWLDCIPGFFWFVFKVGFLLFCFLWIRATLPRYRYDQLMRLGWKVFLPLTLFWVVLVSSVLVYTDNLPSI</sequence>
<proteinExistence type="inferred from homology"/>
<comment type="function">
    <text evidence="1">NDH-1 shuttles electrons from NADH, via FMN and iron-sulfur (Fe-S) centers, to quinones in the respiratory chain. The immediate electron acceptor for the enzyme in this species is believed to be ubiquinone. Couples the redox reaction to proton translocation (for every two electrons transferred, four hydrogen ions are translocated across the cytoplasmic membrane), and thus conserves the redox energy in a proton gradient. This subunit may bind ubiquinone.</text>
</comment>
<comment type="catalytic activity">
    <reaction evidence="1">
        <text>a quinone + NADH + 5 H(+)(in) = a quinol + NAD(+) + 4 H(+)(out)</text>
        <dbReference type="Rhea" id="RHEA:57888"/>
        <dbReference type="ChEBI" id="CHEBI:15378"/>
        <dbReference type="ChEBI" id="CHEBI:24646"/>
        <dbReference type="ChEBI" id="CHEBI:57540"/>
        <dbReference type="ChEBI" id="CHEBI:57945"/>
        <dbReference type="ChEBI" id="CHEBI:132124"/>
    </reaction>
</comment>
<comment type="subunit">
    <text evidence="1">NDH-1 is composed of 14 different subunits. Subunits NuoA, H, J, K, L, M, N constitute the membrane sector of the complex.</text>
</comment>
<comment type="subcellular location">
    <subcellularLocation>
        <location evidence="1">Cell membrane</location>
        <topology evidence="1">Multi-pass membrane protein</topology>
    </subcellularLocation>
</comment>
<comment type="similarity">
    <text evidence="1">Belongs to the complex I subunit 1 family.</text>
</comment>
<keyword id="KW-1003">Cell membrane</keyword>
<keyword id="KW-0472">Membrane</keyword>
<keyword id="KW-0520">NAD</keyword>
<keyword id="KW-0874">Quinone</keyword>
<keyword id="KW-1278">Translocase</keyword>
<keyword id="KW-0812">Transmembrane</keyword>
<keyword id="KW-1133">Transmembrane helix</keyword>
<keyword id="KW-0830">Ubiquinone</keyword>
<accession>C3PLS6</accession>